<reference key="1">
    <citation type="submission" date="2000-12" db="EMBL/GenBank/DDBJ databases">
        <title>Homo sapiens complement-c1q tumor necrosis factor-related protein.</title>
        <authorList>
            <person name="Sheppard P.O."/>
            <person name="Humes J.M."/>
        </authorList>
    </citation>
    <scope>NUCLEOTIDE SEQUENCE [MRNA]</scope>
</reference>
<reference key="2">
    <citation type="submission" date="2004-11" db="EMBL/GenBank/DDBJ databases">
        <title>Characterization of bicistronic genes involved in retinal diseases.</title>
        <authorList>
            <person name="Mandal M.A."/>
            <person name="Ayyagari R."/>
        </authorList>
    </citation>
    <scope>NUCLEOTIDE SEQUENCE [MRNA]</scope>
</reference>
<reference key="3">
    <citation type="journal article" date="2003" name="Genome Res.">
        <title>The secreted protein discovery initiative (SPDI), a large-scale effort to identify novel human secreted and transmembrane proteins: a bioinformatics assessment.</title>
        <authorList>
            <person name="Clark H.F."/>
            <person name="Gurney A.L."/>
            <person name="Abaya E."/>
            <person name="Baker K."/>
            <person name="Baldwin D.T."/>
            <person name="Brush J."/>
            <person name="Chen J."/>
            <person name="Chow B."/>
            <person name="Chui C."/>
            <person name="Crowley C."/>
            <person name="Currell B."/>
            <person name="Deuel B."/>
            <person name="Dowd P."/>
            <person name="Eaton D."/>
            <person name="Foster J.S."/>
            <person name="Grimaldi C."/>
            <person name="Gu Q."/>
            <person name="Hass P.E."/>
            <person name="Heldens S."/>
            <person name="Huang A."/>
            <person name="Kim H.S."/>
            <person name="Klimowski L."/>
            <person name="Jin Y."/>
            <person name="Johnson S."/>
            <person name="Lee J."/>
            <person name="Lewis L."/>
            <person name="Liao D."/>
            <person name="Mark M.R."/>
            <person name="Robbie E."/>
            <person name="Sanchez C."/>
            <person name="Schoenfeld J."/>
            <person name="Seshagiri S."/>
            <person name="Simmons L."/>
            <person name="Singh J."/>
            <person name="Smith V."/>
            <person name="Stinson J."/>
            <person name="Vagts A."/>
            <person name="Vandlen R.L."/>
            <person name="Watanabe C."/>
            <person name="Wieand D."/>
            <person name="Woods K."/>
            <person name="Xie M.-H."/>
            <person name="Yansura D.G."/>
            <person name="Yi S."/>
            <person name="Yu G."/>
            <person name="Yuan J."/>
            <person name="Zhang M."/>
            <person name="Zhang Z."/>
            <person name="Goddard A.D."/>
            <person name="Wood W.I."/>
            <person name="Godowski P.J."/>
            <person name="Gray A.M."/>
        </authorList>
    </citation>
    <scope>NUCLEOTIDE SEQUENCE [LARGE SCALE MRNA]</scope>
</reference>
<reference key="4">
    <citation type="journal article" date="2006" name="Nature">
        <title>Human chromosome 11 DNA sequence and analysis including novel gene identification.</title>
        <authorList>
            <person name="Taylor T.D."/>
            <person name="Noguchi H."/>
            <person name="Totoki Y."/>
            <person name="Toyoda A."/>
            <person name="Kuroki Y."/>
            <person name="Dewar K."/>
            <person name="Lloyd C."/>
            <person name="Itoh T."/>
            <person name="Takeda T."/>
            <person name="Kim D.-W."/>
            <person name="She X."/>
            <person name="Barlow K.F."/>
            <person name="Bloom T."/>
            <person name="Bruford E."/>
            <person name="Chang J.L."/>
            <person name="Cuomo C.A."/>
            <person name="Eichler E."/>
            <person name="FitzGerald M.G."/>
            <person name="Jaffe D.B."/>
            <person name="LaButti K."/>
            <person name="Nicol R."/>
            <person name="Park H.-S."/>
            <person name="Seaman C."/>
            <person name="Sougnez C."/>
            <person name="Yang X."/>
            <person name="Zimmer A.R."/>
            <person name="Zody M.C."/>
            <person name="Birren B.W."/>
            <person name="Nusbaum C."/>
            <person name="Fujiyama A."/>
            <person name="Hattori M."/>
            <person name="Rogers J."/>
            <person name="Lander E.S."/>
            <person name="Sakaki Y."/>
        </authorList>
    </citation>
    <scope>NUCLEOTIDE SEQUENCE [LARGE SCALE GENOMIC DNA]</scope>
</reference>
<reference key="5">
    <citation type="submission" date="2005-07" db="EMBL/GenBank/DDBJ databases">
        <authorList>
            <person name="Mural R.J."/>
            <person name="Istrail S."/>
            <person name="Sutton G.G."/>
            <person name="Florea L."/>
            <person name="Halpern A.L."/>
            <person name="Mobarry C.M."/>
            <person name="Lippert R."/>
            <person name="Walenz B."/>
            <person name="Shatkay H."/>
            <person name="Dew I."/>
            <person name="Miller J.R."/>
            <person name="Flanigan M.J."/>
            <person name="Edwards N.J."/>
            <person name="Bolanos R."/>
            <person name="Fasulo D."/>
            <person name="Halldorsson B.V."/>
            <person name="Hannenhalli S."/>
            <person name="Turner R."/>
            <person name="Yooseph S."/>
            <person name="Lu F."/>
            <person name="Nusskern D.R."/>
            <person name="Shue B.C."/>
            <person name="Zheng X.H."/>
            <person name="Zhong F."/>
            <person name="Delcher A.L."/>
            <person name="Huson D.H."/>
            <person name="Kravitz S.A."/>
            <person name="Mouchard L."/>
            <person name="Reinert K."/>
            <person name="Remington K.A."/>
            <person name="Clark A.G."/>
            <person name="Waterman M.S."/>
            <person name="Eichler E.E."/>
            <person name="Adams M.D."/>
            <person name="Hunkapiller M.W."/>
            <person name="Myers E.W."/>
            <person name="Venter J.C."/>
        </authorList>
    </citation>
    <scope>NUCLEOTIDE SEQUENCE [LARGE SCALE GENOMIC DNA]</scope>
</reference>
<reference key="6">
    <citation type="submission" date="2007-02" db="EMBL/GenBank/DDBJ databases">
        <authorList>
            <consortium name="NHLBI resequencing and genotyping service (RS&amp;G)"/>
        </authorList>
    </citation>
    <scope>NUCLEOTIDE SEQUENCE [GENOMIC DNA]</scope>
</reference>
<reference key="7">
    <citation type="journal article" date="2004" name="Genome Res.">
        <title>The status, quality, and expansion of the NIH full-length cDNA project: the Mammalian Gene Collection (MGC).</title>
        <authorList>
            <consortium name="The MGC Project Team"/>
        </authorList>
    </citation>
    <scope>NUCLEOTIDE SEQUENCE [LARGE SCALE MRNA]</scope>
    <scope>VARIANT ARG-44</scope>
    <source>
        <tissue>Brain</tissue>
    </source>
</reference>
<reference key="8">
    <citation type="journal article" date="2007" name="BMC Genomics">
        <title>The full-ORF clone resource of the German cDNA consortium.</title>
        <authorList>
            <person name="Bechtel S."/>
            <person name="Rosenfelder H."/>
            <person name="Duda A."/>
            <person name="Schmidt C.P."/>
            <person name="Ernst U."/>
            <person name="Wellenreuther R."/>
            <person name="Mehrle A."/>
            <person name="Schuster C."/>
            <person name="Bahr A."/>
            <person name="Bloecker H."/>
            <person name="Heubner D."/>
            <person name="Hoerlein A."/>
            <person name="Michel G."/>
            <person name="Wedler H."/>
            <person name="Koehrer K."/>
            <person name="Ottenwaelder B."/>
            <person name="Poustka A."/>
            <person name="Wiemann S."/>
            <person name="Schupp I."/>
        </authorList>
    </citation>
    <scope>NUCLEOTIDE SEQUENCE [LARGE SCALE MRNA] OF 25-243</scope>
    <source>
        <tissue>Uterus</tissue>
    </source>
</reference>
<reference key="9">
    <citation type="journal article" date="2004" name="Protein Sci.">
        <title>Signal peptide prediction based on analysis of experimentally verified cleavage sites.</title>
        <authorList>
            <person name="Zhang Z."/>
            <person name="Henzel W.J."/>
        </authorList>
    </citation>
    <scope>PROTEIN SEQUENCE OF 16-30</scope>
</reference>
<reference key="10">
    <citation type="journal article" date="2012" name="J. Struct. Biol.">
        <title>Crystal structure of the globular domain of C1QTNF5: Implications for late-onset retinal macular degeneration.</title>
        <authorList>
            <person name="Tu X."/>
            <person name="Palczewski K."/>
        </authorList>
    </citation>
    <scope>X-RAY CRYSTALLOGRAPHY (1.34 ANGSTROMS) OF 103-243</scope>
    <scope>SUBUNIT</scope>
    <scope>VARIANT LORD ARG-163</scope>
</reference>
<reference key="11">
    <citation type="journal article" date="2003" name="Hum. Mol. Genet.">
        <title>Mutation in a short-chain collagen gene, CTRP5, results in extracellular deposit formation in late-onset retinal degeneration: a genetic model for age-related macular degeneration.</title>
        <authorList>
            <person name="Hayward C."/>
            <person name="Shu X."/>
            <person name="Cideciyan A.V."/>
            <person name="Lennon A."/>
            <person name="Barran P."/>
            <person name="Zareparsi S."/>
            <person name="Sawyer L."/>
            <person name="Hendry G."/>
            <person name="Dhillon B."/>
            <person name="Milam A.H."/>
            <person name="Luthert P.J."/>
            <person name="Swaroop A."/>
            <person name="Hastie N.D."/>
            <person name="Jacobson S.G."/>
            <person name="Wright A.F."/>
        </authorList>
    </citation>
    <scope>VARIANT LORD ARG-163</scope>
</reference>
<protein>
    <recommendedName>
        <fullName>Complement C1q tumor necrosis factor-related protein 5</fullName>
    </recommendedName>
</protein>
<proteinExistence type="evidence at protein level"/>
<gene>
    <name type="primary">C1QTNF5</name>
    <name type="synonym">CTRP5</name>
    <name type="ORF">UNQ303/PRO344</name>
</gene>
<sequence>MRPLLVLLLLGLAAGSPPLDDNKIPSLCPGHPGLPGTPGHHGSQGLPGRDGRDGRDGAPGAPGEKGEGGRPGLPGPRGDPGPRGEAGPAGPTGPAGECSVPPRSAFSAKRSESRVPPPSDAPLPFDRVLVNEQGHYDAVTGKFTCQVPGVYYFAVHATVYRASLQFDLVKNGESIASFFQFFGGWPKPASLSGGAMVRLEPEDQVWVQVGVGDYIGIYASIKTDSTFSGFLVYSDWHSSPVFA</sequence>
<comment type="subunit">
    <text evidence="1 7">May interact with ERFE (By similarity). Homotrimer (via collagen-like domain). May form higher order oligomers by supercoiling of the trimers.</text>
</comment>
<comment type="interaction">
    <interactant intactId="EBI-19947914">
        <id>Q9BXJ0</id>
    </interactant>
    <interactant intactId="EBI-19947914">
        <id>Q9BXJ0</id>
        <label>C1QTNF5</label>
    </interactant>
    <organismsDiffer>false</organismsDiffer>
    <experiments>3</experiments>
</comment>
<comment type="interaction">
    <interactant intactId="EBI-19947914">
        <id>Q9BXJ0</id>
    </interactant>
    <interactant intactId="EBI-6873005">
        <id>P43080</id>
        <label>GUCA1A</label>
    </interactant>
    <organismsDiffer>false</organismsDiffer>
    <experiments>3</experiments>
</comment>
<comment type="interaction">
    <interactant intactId="EBI-19947914">
        <id>Q9BXJ0</id>
    </interactant>
    <interactant intactId="EBI-29375513">
        <id>Q9BY79</id>
        <label>MFRP</label>
    </interactant>
    <organismsDiffer>false</organismsDiffer>
    <experiments>3</experiments>
</comment>
<comment type="interaction">
    <interactant intactId="EBI-19947914">
        <id>Q9BXJ0</id>
    </interactant>
    <interactant intactId="EBI-347996">
        <id>O43765</id>
        <label>SGTA</label>
    </interactant>
    <organismsDiffer>false</organismsDiffer>
    <experiments>3</experiments>
</comment>
<comment type="interaction">
    <interactant intactId="EBI-19947914">
        <id>Q9BXJ0</id>
    </interactant>
    <interactant intactId="EBI-744081">
        <id>Q96EQ0</id>
        <label>SGTB</label>
    </interactant>
    <organismsDiffer>false</organismsDiffer>
    <experiments>3</experiments>
</comment>
<comment type="interaction">
    <interactant intactId="EBI-34575799">
        <id>PRO_0000003535</id>
    </interactant>
    <interactant intactId="EBI-34575799">
        <id>PRO_0000003535</id>
        <label>C1QTNF5</label>
        <dbReference type="UniProtKB" id="Q9BXJ0"/>
    </interactant>
    <organismsDiffer>false</organismsDiffer>
    <experiments>2</experiments>
</comment>
<comment type="interaction">
    <interactant intactId="EBI-34575799">
        <id>PRO_0000003535</id>
    </interactant>
    <interactant intactId="EBI-29375513">
        <id>Q9BY79</id>
        <label>MFRP</label>
    </interactant>
    <organismsDiffer>false</organismsDiffer>
    <experiments>5</experiments>
</comment>
<comment type="subcellular location">
    <subcellularLocation>
        <location evidence="8">Secreted</location>
    </subcellularLocation>
</comment>
<comment type="disease" evidence="4 7">
    <disease id="DI-01880">
        <name>Late-onset retinal degeneration</name>
        <acronym>LORD</acronym>
        <description>Autosomal dominant disorder characterized by onset in the fifth to sixth decade with night blindness and punctate yellow-white deposits in the retinal fundus, progressing to severe central and peripheral degeneration, with choroidal neovascularization and chorioretinal atrophy.</description>
        <dbReference type="MIM" id="605670"/>
    </disease>
    <text>The disease is caused by variants affecting the gene represented in this entry.</text>
</comment>
<comment type="miscellaneous">
    <text>This protein is produced by a bicistronic gene which also produces the MFRP protein from a non-overlapping reading frame.</text>
</comment>
<accession>Q9BXJ0</accession>
<accession>A6NDD3</accession>
<accession>B0YJ35</accession>
<accession>Q335M2</accession>
<accession>Q8N6P2</accession>
<accession>Q9UFX4</accession>
<keyword id="KW-0002">3D-structure</keyword>
<keyword id="KW-0176">Collagen</keyword>
<keyword id="KW-0903">Direct protein sequencing</keyword>
<keyword id="KW-0225">Disease variant</keyword>
<keyword id="KW-1267">Proteomics identification</keyword>
<keyword id="KW-1185">Reference proteome</keyword>
<keyword id="KW-0964">Secreted</keyword>
<keyword id="KW-0732">Signal</keyword>
<organism>
    <name type="scientific">Homo sapiens</name>
    <name type="common">Human</name>
    <dbReference type="NCBI Taxonomy" id="9606"/>
    <lineage>
        <taxon>Eukaryota</taxon>
        <taxon>Metazoa</taxon>
        <taxon>Chordata</taxon>
        <taxon>Craniata</taxon>
        <taxon>Vertebrata</taxon>
        <taxon>Euteleostomi</taxon>
        <taxon>Mammalia</taxon>
        <taxon>Eutheria</taxon>
        <taxon>Euarchontoglires</taxon>
        <taxon>Primates</taxon>
        <taxon>Haplorrhini</taxon>
        <taxon>Catarrhini</taxon>
        <taxon>Hominidae</taxon>
        <taxon>Homo</taxon>
    </lineage>
</organism>
<feature type="signal peptide" evidence="5">
    <location>
        <begin position="1"/>
        <end position="15"/>
    </location>
</feature>
<feature type="chain" id="PRO_0000003535" description="Complement C1q tumor necrosis factor-related protein 5">
    <location>
        <begin position="16"/>
        <end position="243"/>
    </location>
</feature>
<feature type="domain" description="Collagen-like">
    <location>
        <begin position="30"/>
        <end position="95"/>
    </location>
</feature>
<feature type="domain" description="C1q" evidence="2">
    <location>
        <begin position="99"/>
        <end position="238"/>
    </location>
</feature>
<feature type="region of interest" description="Disordered" evidence="3">
    <location>
        <begin position="15"/>
        <end position="125"/>
    </location>
</feature>
<feature type="compositionally biased region" description="Low complexity" evidence="3">
    <location>
        <begin position="83"/>
        <end position="96"/>
    </location>
</feature>
<feature type="sequence variant" id="VAR_032628" description="In dbSNP:rs11538245." evidence="6">
    <original>Q</original>
    <variation>R</variation>
    <location>
        <position position="44"/>
    </location>
</feature>
<feature type="sequence variant" id="VAR_032629" description="In LORD; dbSNP:rs111033578." evidence="4 7">
    <original>S</original>
    <variation>R</variation>
    <location>
        <position position="163"/>
    </location>
</feature>
<feature type="strand" evidence="9">
    <location>
        <begin position="105"/>
        <end position="109"/>
    </location>
</feature>
<feature type="strand" evidence="10">
    <location>
        <begin position="119"/>
        <end position="121"/>
    </location>
</feature>
<feature type="strand" evidence="9">
    <location>
        <begin position="127"/>
        <end position="130"/>
    </location>
</feature>
<feature type="turn" evidence="9">
    <location>
        <begin position="138"/>
        <end position="141"/>
    </location>
</feature>
<feature type="strand" evidence="9">
    <location>
        <begin position="142"/>
        <end position="144"/>
    </location>
</feature>
<feature type="strand" evidence="9">
    <location>
        <begin position="149"/>
        <end position="170"/>
    </location>
</feature>
<feature type="strand" evidence="9">
    <location>
        <begin position="173"/>
        <end position="180"/>
    </location>
</feature>
<feature type="strand" evidence="9">
    <location>
        <begin position="189"/>
        <end position="199"/>
    </location>
</feature>
<feature type="strand" evidence="9">
    <location>
        <begin position="204"/>
        <end position="208"/>
    </location>
</feature>
<feature type="strand" evidence="9">
    <location>
        <begin position="215"/>
        <end position="218"/>
    </location>
</feature>
<feature type="strand" evidence="9">
    <location>
        <begin position="226"/>
        <end position="235"/>
    </location>
</feature>
<feature type="turn" evidence="9">
    <location>
        <begin position="240"/>
        <end position="242"/>
    </location>
</feature>
<name>C1QT5_HUMAN</name>
<dbReference type="EMBL" id="AF329841">
    <property type="protein sequence ID" value="AAK17965.1"/>
    <property type="molecule type" value="mRNA"/>
</dbReference>
<dbReference type="EMBL" id="AJ862823">
    <property type="protein sequence ID" value="CAH93522.1"/>
    <property type="molecule type" value="mRNA"/>
</dbReference>
<dbReference type="EMBL" id="AY358383">
    <property type="protein sequence ID" value="AAQ88749.1"/>
    <property type="molecule type" value="mRNA"/>
</dbReference>
<dbReference type="EMBL" id="CH471065">
    <property type="protein sequence ID" value="EAW67481.1"/>
    <property type="molecule type" value="Genomic_DNA"/>
</dbReference>
<dbReference type="EMBL" id="EF444994">
    <property type="protein sequence ID" value="ACA06014.1"/>
    <property type="molecule type" value="Genomic_DNA"/>
</dbReference>
<dbReference type="EMBL" id="BC029485">
    <property type="protein sequence ID" value="AAH29485.1"/>
    <property type="molecule type" value="mRNA"/>
</dbReference>
<dbReference type="EMBL" id="AL110261">
    <property type="protein sequence ID" value="CAB53702.1"/>
    <property type="molecule type" value="mRNA"/>
</dbReference>
<dbReference type="CCDS" id="CCDS8420.1"/>
<dbReference type="PIR" id="T14782">
    <property type="entry name" value="T14782"/>
</dbReference>
<dbReference type="RefSeq" id="NP_001265360.1">
    <property type="nucleotide sequence ID" value="NM_001278431.2"/>
</dbReference>
<dbReference type="RefSeq" id="NP_056460.1">
    <property type="nucleotide sequence ID" value="NM_015645.5"/>
</dbReference>
<dbReference type="PDB" id="4F3J">
    <property type="method" value="X-ray"/>
    <property type="resolution" value="1.34 A"/>
    <property type="chains" value="A=103-243"/>
</dbReference>
<dbReference type="PDB" id="4NN0">
    <property type="method" value="X-ray"/>
    <property type="resolution" value="1.42 A"/>
    <property type="chains" value="A/B/C=103-243"/>
</dbReference>
<dbReference type="PDBsum" id="4F3J"/>
<dbReference type="PDBsum" id="4NN0"/>
<dbReference type="SMR" id="Q9BXJ0"/>
<dbReference type="BioGRID" id="125392">
    <property type="interactions" value="4"/>
</dbReference>
<dbReference type="FunCoup" id="Q9BXJ0">
    <property type="interactions" value="53"/>
</dbReference>
<dbReference type="IntAct" id="Q9BXJ0">
    <property type="interactions" value="4"/>
</dbReference>
<dbReference type="MINT" id="Q9BXJ0"/>
<dbReference type="STRING" id="9606.ENSP00000431140"/>
<dbReference type="GlyGen" id="Q9BXJ0">
    <property type="glycosylation" value="2 sites"/>
</dbReference>
<dbReference type="iPTMnet" id="Q9BXJ0"/>
<dbReference type="PhosphoSitePlus" id="Q9BXJ0"/>
<dbReference type="BioMuta" id="C1QTNF5"/>
<dbReference type="DMDM" id="20177861"/>
<dbReference type="jPOST" id="Q9BXJ0"/>
<dbReference type="MassIVE" id="Q9BXJ0"/>
<dbReference type="PaxDb" id="9606-ENSP00000431140"/>
<dbReference type="PeptideAtlas" id="Q9BXJ0"/>
<dbReference type="ProteomicsDB" id="79432"/>
<dbReference type="ABCD" id="Q9BXJ0">
    <property type="antibodies" value="42 sequenced antibodies"/>
</dbReference>
<dbReference type="Antibodypedia" id="32683">
    <property type="antibodies" value="275 antibodies from 34 providers"/>
</dbReference>
<dbReference type="DNASU" id="83552"/>
<dbReference type="Ensembl" id="ENST00000528368.3">
    <property type="protein sequence ID" value="ENSP00000431140.1"/>
    <property type="gene ID" value="ENSG00000223953.6"/>
</dbReference>
<dbReference type="Ensembl" id="ENST00000530681.2">
    <property type="protein sequence ID" value="ENSP00000456533.2"/>
    <property type="gene ID" value="ENSG00000223953.6"/>
</dbReference>
<dbReference type="GeneID" id="114902"/>
<dbReference type="KEGG" id="hsa:114902"/>
<dbReference type="MANE-Select" id="ENST00000528368.3">
    <property type="protein sequence ID" value="ENSP00000431140.1"/>
    <property type="RefSeq nucleotide sequence ID" value="NM_001278431.2"/>
    <property type="RefSeq protein sequence ID" value="NP_001265360.1"/>
</dbReference>
<dbReference type="UCSC" id="uc058iiv.1">
    <property type="organism name" value="human"/>
</dbReference>
<dbReference type="AGR" id="HGNC:14344"/>
<dbReference type="CTD" id="114902"/>
<dbReference type="DisGeNET" id="114902"/>
<dbReference type="GeneCards" id="C1QTNF5"/>
<dbReference type="HGNC" id="HGNC:14344">
    <property type="gene designation" value="C1QTNF5"/>
</dbReference>
<dbReference type="HPA" id="ENSG00000223953">
    <property type="expression patterns" value="Tissue enriched (choroid)"/>
</dbReference>
<dbReference type="MalaCards" id="C1QTNF5"/>
<dbReference type="MIM" id="605670">
    <property type="type" value="phenotype"/>
</dbReference>
<dbReference type="MIM" id="608752">
    <property type="type" value="gene"/>
</dbReference>
<dbReference type="neXtProt" id="NX_Q9BXJ0"/>
<dbReference type="OpenTargets" id="ENSG00000223953"/>
<dbReference type="Orphanet" id="67042">
    <property type="disease" value="Late-onset retinal degeneration"/>
</dbReference>
<dbReference type="PharmGKB" id="PA30776"/>
<dbReference type="VEuPathDB" id="HostDB:ENSG00000223953"/>
<dbReference type="eggNOG" id="ENOG502QUEA">
    <property type="taxonomic scope" value="Eukaryota"/>
</dbReference>
<dbReference type="GeneTree" id="ENSGT00940000161353"/>
<dbReference type="HOGENOM" id="CLU_001074_0_2_1"/>
<dbReference type="InParanoid" id="Q9BXJ0"/>
<dbReference type="OMA" id="FFQYYGN"/>
<dbReference type="OrthoDB" id="6090657at2759"/>
<dbReference type="PAN-GO" id="Q9BXJ0">
    <property type="GO annotations" value="3 GO annotations based on evolutionary models"/>
</dbReference>
<dbReference type="PhylomeDB" id="Q9BXJ0"/>
<dbReference type="TreeFam" id="TF329591"/>
<dbReference type="PathwayCommons" id="Q9BXJ0"/>
<dbReference type="SignaLink" id="Q9BXJ0"/>
<dbReference type="SIGNOR" id="Q9BXJ0"/>
<dbReference type="BioGRID-ORCS" id="114902">
    <property type="hits" value="16 hits in 1150 CRISPR screens"/>
</dbReference>
<dbReference type="EvolutionaryTrace" id="Q9BXJ0"/>
<dbReference type="GeneWiki" id="C1QTNF5"/>
<dbReference type="GenomeRNAi" id="114902"/>
<dbReference type="Pharos" id="Q9BXJ0">
    <property type="development level" value="Tbio"/>
</dbReference>
<dbReference type="PRO" id="PR:Q9BXJ0"/>
<dbReference type="Proteomes" id="UP000005640">
    <property type="component" value="Chromosome 11"/>
</dbReference>
<dbReference type="RNAct" id="Q9BXJ0">
    <property type="molecule type" value="protein"/>
</dbReference>
<dbReference type="Bgee" id="ENSG00000223953">
    <property type="expression patterns" value="Expressed in apex of heart and 91 other cell types or tissues"/>
</dbReference>
<dbReference type="ExpressionAtlas" id="Q9BXJ0">
    <property type="expression patterns" value="baseline and differential"/>
</dbReference>
<dbReference type="GO" id="GO:0016324">
    <property type="term" value="C:apical plasma membrane"/>
    <property type="evidence" value="ECO:0007669"/>
    <property type="project" value="Ensembl"/>
</dbReference>
<dbReference type="GO" id="GO:0005923">
    <property type="term" value="C:bicellular tight junction"/>
    <property type="evidence" value="ECO:0007669"/>
    <property type="project" value="Ensembl"/>
</dbReference>
<dbReference type="GO" id="GO:0042995">
    <property type="term" value="C:cell projection"/>
    <property type="evidence" value="ECO:0000318"/>
    <property type="project" value="GO_Central"/>
</dbReference>
<dbReference type="GO" id="GO:0005581">
    <property type="term" value="C:collagen trimer"/>
    <property type="evidence" value="ECO:0007669"/>
    <property type="project" value="UniProtKB-KW"/>
</dbReference>
<dbReference type="GO" id="GO:0005615">
    <property type="term" value="C:extracellular space"/>
    <property type="evidence" value="ECO:0000318"/>
    <property type="project" value="GO_Central"/>
</dbReference>
<dbReference type="GO" id="GO:0016328">
    <property type="term" value="C:lateral plasma membrane"/>
    <property type="evidence" value="ECO:0007669"/>
    <property type="project" value="Ensembl"/>
</dbReference>
<dbReference type="GO" id="GO:0005886">
    <property type="term" value="C:plasma membrane"/>
    <property type="evidence" value="ECO:0000318"/>
    <property type="project" value="GO_Central"/>
</dbReference>
<dbReference type="GO" id="GO:0030133">
    <property type="term" value="C:transport vesicle"/>
    <property type="evidence" value="ECO:0007669"/>
    <property type="project" value="Ensembl"/>
</dbReference>
<dbReference type="GO" id="GO:0042802">
    <property type="term" value="F:identical protein binding"/>
    <property type="evidence" value="ECO:0000353"/>
    <property type="project" value="IntAct"/>
</dbReference>
<dbReference type="GO" id="GO:0048839">
    <property type="term" value="P:inner ear development"/>
    <property type="evidence" value="ECO:0007669"/>
    <property type="project" value="Ensembl"/>
</dbReference>
<dbReference type="GO" id="GO:0009306">
    <property type="term" value="P:protein secretion"/>
    <property type="evidence" value="ECO:0007669"/>
    <property type="project" value="Ensembl"/>
</dbReference>
<dbReference type="FunFam" id="2.60.120.40:FF:000001">
    <property type="entry name" value="Complement C1q B chain"/>
    <property type="match status" value="1"/>
</dbReference>
<dbReference type="Gene3D" id="2.60.120.40">
    <property type="match status" value="1"/>
</dbReference>
<dbReference type="InterPro" id="IPR001073">
    <property type="entry name" value="C1q_dom"/>
</dbReference>
<dbReference type="InterPro" id="IPR008160">
    <property type="entry name" value="Collagen"/>
</dbReference>
<dbReference type="InterPro" id="IPR050392">
    <property type="entry name" value="Collagen/C1q_domain"/>
</dbReference>
<dbReference type="InterPro" id="IPR008983">
    <property type="entry name" value="Tumour_necrosis_fac-like_dom"/>
</dbReference>
<dbReference type="PANTHER" id="PTHR15427:SF27">
    <property type="entry name" value="COMPLEMENT C1Q TUMOR NECROSIS FACTOR-RELATED PROTEIN 5"/>
    <property type="match status" value="1"/>
</dbReference>
<dbReference type="PANTHER" id="PTHR15427">
    <property type="entry name" value="EMILIN ELASTIN MICROFIBRIL INTERFACE-LOCATED PROTEIN ELASTIN MICROFIBRIL INTERFACER"/>
    <property type="match status" value="1"/>
</dbReference>
<dbReference type="Pfam" id="PF00386">
    <property type="entry name" value="C1q"/>
    <property type="match status" value="1"/>
</dbReference>
<dbReference type="Pfam" id="PF01391">
    <property type="entry name" value="Collagen"/>
    <property type="match status" value="1"/>
</dbReference>
<dbReference type="PRINTS" id="PR00007">
    <property type="entry name" value="COMPLEMNTC1Q"/>
</dbReference>
<dbReference type="SMART" id="SM00110">
    <property type="entry name" value="C1Q"/>
    <property type="match status" value="1"/>
</dbReference>
<dbReference type="SUPFAM" id="SSF49842">
    <property type="entry name" value="TNF-like"/>
    <property type="match status" value="1"/>
</dbReference>
<dbReference type="PROSITE" id="PS50871">
    <property type="entry name" value="C1Q"/>
    <property type="match status" value="1"/>
</dbReference>
<evidence type="ECO:0000250" key="1"/>
<evidence type="ECO:0000255" key="2">
    <source>
        <dbReference type="PROSITE-ProRule" id="PRU00368"/>
    </source>
</evidence>
<evidence type="ECO:0000256" key="3">
    <source>
        <dbReference type="SAM" id="MobiDB-lite"/>
    </source>
</evidence>
<evidence type="ECO:0000269" key="4">
    <source>
    </source>
</evidence>
<evidence type="ECO:0000269" key="5">
    <source>
    </source>
</evidence>
<evidence type="ECO:0000269" key="6">
    <source>
    </source>
</evidence>
<evidence type="ECO:0000269" key="7">
    <source>
    </source>
</evidence>
<evidence type="ECO:0000305" key="8"/>
<evidence type="ECO:0007829" key="9">
    <source>
        <dbReference type="PDB" id="4F3J"/>
    </source>
</evidence>
<evidence type="ECO:0007829" key="10">
    <source>
        <dbReference type="PDB" id="4NN0"/>
    </source>
</evidence>